<proteinExistence type="inferred from homology"/>
<organism>
    <name type="scientific">Lactobacillus acidophilus (strain ATCC 700396 / NCK56 / N2 / NCFM)</name>
    <dbReference type="NCBI Taxonomy" id="272621"/>
    <lineage>
        <taxon>Bacteria</taxon>
        <taxon>Bacillati</taxon>
        <taxon>Bacillota</taxon>
        <taxon>Bacilli</taxon>
        <taxon>Lactobacillales</taxon>
        <taxon>Lactobacillaceae</taxon>
        <taxon>Lactobacillus</taxon>
    </lineage>
</organism>
<accession>Q5FL70</accession>
<dbReference type="EC" id="1.1.1.94" evidence="1"/>
<dbReference type="EMBL" id="CP000033">
    <property type="protein sequence ID" value="AAV42554.1"/>
    <property type="molecule type" value="Genomic_DNA"/>
</dbReference>
<dbReference type="RefSeq" id="WP_003546563.1">
    <property type="nucleotide sequence ID" value="NC_006814.3"/>
</dbReference>
<dbReference type="RefSeq" id="YP_193585.1">
    <property type="nucleotide sequence ID" value="NC_006814.3"/>
</dbReference>
<dbReference type="SMR" id="Q5FL70"/>
<dbReference type="STRING" id="272621.LBA0678"/>
<dbReference type="KEGG" id="lac:LBA0678"/>
<dbReference type="PATRIC" id="fig|272621.13.peg.648"/>
<dbReference type="eggNOG" id="COG0240">
    <property type="taxonomic scope" value="Bacteria"/>
</dbReference>
<dbReference type="HOGENOM" id="CLU_033449_0_2_9"/>
<dbReference type="OrthoDB" id="9812273at2"/>
<dbReference type="BioCyc" id="LACI272621:G1G49-700-MONOMER"/>
<dbReference type="UniPathway" id="UPA00940"/>
<dbReference type="Proteomes" id="UP000006381">
    <property type="component" value="Chromosome"/>
</dbReference>
<dbReference type="GO" id="GO:0005829">
    <property type="term" value="C:cytosol"/>
    <property type="evidence" value="ECO:0007669"/>
    <property type="project" value="TreeGrafter"/>
</dbReference>
<dbReference type="GO" id="GO:0047952">
    <property type="term" value="F:glycerol-3-phosphate dehydrogenase [NAD(P)+] activity"/>
    <property type="evidence" value="ECO:0007669"/>
    <property type="project" value="UniProtKB-UniRule"/>
</dbReference>
<dbReference type="GO" id="GO:0051287">
    <property type="term" value="F:NAD binding"/>
    <property type="evidence" value="ECO:0007669"/>
    <property type="project" value="InterPro"/>
</dbReference>
<dbReference type="GO" id="GO:0005975">
    <property type="term" value="P:carbohydrate metabolic process"/>
    <property type="evidence" value="ECO:0007669"/>
    <property type="project" value="InterPro"/>
</dbReference>
<dbReference type="GO" id="GO:0046167">
    <property type="term" value="P:glycerol-3-phosphate biosynthetic process"/>
    <property type="evidence" value="ECO:0007669"/>
    <property type="project" value="UniProtKB-UniRule"/>
</dbReference>
<dbReference type="GO" id="GO:0046168">
    <property type="term" value="P:glycerol-3-phosphate catabolic process"/>
    <property type="evidence" value="ECO:0007669"/>
    <property type="project" value="InterPro"/>
</dbReference>
<dbReference type="GO" id="GO:0006650">
    <property type="term" value="P:glycerophospholipid metabolic process"/>
    <property type="evidence" value="ECO:0007669"/>
    <property type="project" value="UniProtKB-UniRule"/>
</dbReference>
<dbReference type="GO" id="GO:0008654">
    <property type="term" value="P:phospholipid biosynthetic process"/>
    <property type="evidence" value="ECO:0007669"/>
    <property type="project" value="UniProtKB-KW"/>
</dbReference>
<dbReference type="FunFam" id="1.10.1040.10:FF:000001">
    <property type="entry name" value="Glycerol-3-phosphate dehydrogenase [NAD(P)+]"/>
    <property type="match status" value="1"/>
</dbReference>
<dbReference type="FunFam" id="3.40.50.720:FF:000019">
    <property type="entry name" value="Glycerol-3-phosphate dehydrogenase [NAD(P)+]"/>
    <property type="match status" value="1"/>
</dbReference>
<dbReference type="Gene3D" id="1.10.1040.10">
    <property type="entry name" value="N-(1-d-carboxylethyl)-l-norvaline Dehydrogenase, domain 2"/>
    <property type="match status" value="1"/>
</dbReference>
<dbReference type="Gene3D" id="3.40.50.720">
    <property type="entry name" value="NAD(P)-binding Rossmann-like Domain"/>
    <property type="match status" value="1"/>
</dbReference>
<dbReference type="HAMAP" id="MF_00394">
    <property type="entry name" value="NAD_Glyc3P_dehydrog"/>
    <property type="match status" value="1"/>
</dbReference>
<dbReference type="InterPro" id="IPR008927">
    <property type="entry name" value="6-PGluconate_DH-like_C_sf"/>
</dbReference>
<dbReference type="InterPro" id="IPR013328">
    <property type="entry name" value="6PGD_dom2"/>
</dbReference>
<dbReference type="InterPro" id="IPR006168">
    <property type="entry name" value="G3P_DH_NAD-dep"/>
</dbReference>
<dbReference type="InterPro" id="IPR006109">
    <property type="entry name" value="G3P_DH_NAD-dep_C"/>
</dbReference>
<dbReference type="InterPro" id="IPR011128">
    <property type="entry name" value="G3P_DH_NAD-dep_N"/>
</dbReference>
<dbReference type="InterPro" id="IPR036291">
    <property type="entry name" value="NAD(P)-bd_dom_sf"/>
</dbReference>
<dbReference type="NCBIfam" id="NF000940">
    <property type="entry name" value="PRK00094.1-2"/>
    <property type="match status" value="1"/>
</dbReference>
<dbReference type="NCBIfam" id="NF000941">
    <property type="entry name" value="PRK00094.1-3"/>
    <property type="match status" value="1"/>
</dbReference>
<dbReference type="NCBIfam" id="NF000942">
    <property type="entry name" value="PRK00094.1-4"/>
    <property type="match status" value="1"/>
</dbReference>
<dbReference type="PANTHER" id="PTHR11728">
    <property type="entry name" value="GLYCEROL-3-PHOSPHATE DEHYDROGENASE"/>
    <property type="match status" value="1"/>
</dbReference>
<dbReference type="PANTHER" id="PTHR11728:SF1">
    <property type="entry name" value="GLYCEROL-3-PHOSPHATE DEHYDROGENASE [NAD(+)] 2, CHLOROPLASTIC"/>
    <property type="match status" value="1"/>
</dbReference>
<dbReference type="Pfam" id="PF07479">
    <property type="entry name" value="NAD_Gly3P_dh_C"/>
    <property type="match status" value="1"/>
</dbReference>
<dbReference type="Pfam" id="PF01210">
    <property type="entry name" value="NAD_Gly3P_dh_N"/>
    <property type="match status" value="1"/>
</dbReference>
<dbReference type="PIRSF" id="PIRSF000114">
    <property type="entry name" value="Glycerol-3-P_dh"/>
    <property type="match status" value="1"/>
</dbReference>
<dbReference type="PRINTS" id="PR00077">
    <property type="entry name" value="GPDHDRGNASE"/>
</dbReference>
<dbReference type="SUPFAM" id="SSF48179">
    <property type="entry name" value="6-phosphogluconate dehydrogenase C-terminal domain-like"/>
    <property type="match status" value="1"/>
</dbReference>
<dbReference type="SUPFAM" id="SSF51735">
    <property type="entry name" value="NAD(P)-binding Rossmann-fold domains"/>
    <property type="match status" value="1"/>
</dbReference>
<dbReference type="PROSITE" id="PS00957">
    <property type="entry name" value="NAD_G3PDH"/>
    <property type="match status" value="1"/>
</dbReference>
<sequence length="339" mass="36494">MTKIAVLGNGSWGSVLGSMLADNGNDVVLYGNIESVNDEINATHTNSHYMKDWKLNENTRATGDLEDALDGAEVVLFVLPTKAVRIVAKNVREILDKSGAKPLLVTATKGIEPGTKKLISEILTDEIYPNDEDKIVAISGPSHAENVAQKDLTAIACASTNEENAKKVQKLFSNDYVRFYTNDDLVGVEVGGAVKNVIAIAAGILVGQGYGDDAKAALMTRGLAEITRLGVNYFGAKPMTFSGLSGIGDLIVTCTSVNSRNWRAGKQIGEGKSLDYVLKNMGQVVEGATTVKAVHELCEEKNIDMPISEAIYRVLYEGTDVETEIKKMMGRAPKPEIRL</sequence>
<feature type="chain" id="PRO_0000255322" description="Glycerol-3-phosphate dehydrogenase [NAD(P)+]">
    <location>
        <begin position="1"/>
        <end position="339"/>
    </location>
</feature>
<feature type="active site" description="Proton acceptor" evidence="1">
    <location>
        <position position="195"/>
    </location>
</feature>
<feature type="binding site" evidence="1">
    <location>
        <position position="11"/>
    </location>
    <ligand>
        <name>NADPH</name>
        <dbReference type="ChEBI" id="CHEBI:57783"/>
    </ligand>
</feature>
<feature type="binding site" evidence="1">
    <location>
        <position position="12"/>
    </location>
    <ligand>
        <name>NADPH</name>
        <dbReference type="ChEBI" id="CHEBI:57783"/>
    </ligand>
</feature>
<feature type="binding site" evidence="1">
    <location>
        <position position="109"/>
    </location>
    <ligand>
        <name>NADPH</name>
        <dbReference type="ChEBI" id="CHEBI:57783"/>
    </ligand>
</feature>
<feature type="binding site" evidence="1">
    <location>
        <position position="109"/>
    </location>
    <ligand>
        <name>sn-glycerol 3-phosphate</name>
        <dbReference type="ChEBI" id="CHEBI:57597"/>
    </ligand>
</feature>
<feature type="binding site" evidence="1">
    <location>
        <position position="140"/>
    </location>
    <ligand>
        <name>sn-glycerol 3-phosphate</name>
        <dbReference type="ChEBI" id="CHEBI:57597"/>
    </ligand>
</feature>
<feature type="binding site" evidence="1">
    <location>
        <position position="142"/>
    </location>
    <ligand>
        <name>sn-glycerol 3-phosphate</name>
        <dbReference type="ChEBI" id="CHEBI:57597"/>
    </ligand>
</feature>
<feature type="binding site" evidence="1">
    <location>
        <position position="144"/>
    </location>
    <ligand>
        <name>NADPH</name>
        <dbReference type="ChEBI" id="CHEBI:57783"/>
    </ligand>
</feature>
<feature type="binding site" evidence="1">
    <location>
        <position position="195"/>
    </location>
    <ligand>
        <name>sn-glycerol 3-phosphate</name>
        <dbReference type="ChEBI" id="CHEBI:57597"/>
    </ligand>
</feature>
<feature type="binding site" evidence="1">
    <location>
        <position position="249"/>
    </location>
    <ligand>
        <name>sn-glycerol 3-phosphate</name>
        <dbReference type="ChEBI" id="CHEBI:57597"/>
    </ligand>
</feature>
<feature type="binding site" evidence="1">
    <location>
        <position position="259"/>
    </location>
    <ligand>
        <name>sn-glycerol 3-phosphate</name>
        <dbReference type="ChEBI" id="CHEBI:57597"/>
    </ligand>
</feature>
<feature type="binding site" evidence="1">
    <location>
        <position position="260"/>
    </location>
    <ligand>
        <name>NADPH</name>
        <dbReference type="ChEBI" id="CHEBI:57783"/>
    </ligand>
</feature>
<feature type="binding site" evidence="1">
    <location>
        <position position="260"/>
    </location>
    <ligand>
        <name>sn-glycerol 3-phosphate</name>
        <dbReference type="ChEBI" id="CHEBI:57597"/>
    </ligand>
</feature>
<feature type="binding site" evidence="1">
    <location>
        <position position="261"/>
    </location>
    <ligand>
        <name>sn-glycerol 3-phosphate</name>
        <dbReference type="ChEBI" id="CHEBI:57597"/>
    </ligand>
</feature>
<feature type="binding site" evidence="1">
    <location>
        <position position="284"/>
    </location>
    <ligand>
        <name>NADPH</name>
        <dbReference type="ChEBI" id="CHEBI:57783"/>
    </ligand>
</feature>
<feature type="binding site" evidence="1">
    <location>
        <position position="286"/>
    </location>
    <ligand>
        <name>NADPH</name>
        <dbReference type="ChEBI" id="CHEBI:57783"/>
    </ligand>
</feature>
<evidence type="ECO:0000255" key="1">
    <source>
        <dbReference type="HAMAP-Rule" id="MF_00394"/>
    </source>
</evidence>
<comment type="function">
    <text evidence="1">Catalyzes the reduction of the glycolytic intermediate dihydroxyacetone phosphate (DHAP) to sn-glycerol 3-phosphate (G3P), the key precursor for phospholipid synthesis.</text>
</comment>
<comment type="catalytic activity">
    <reaction evidence="1">
        <text>sn-glycerol 3-phosphate + NAD(+) = dihydroxyacetone phosphate + NADH + H(+)</text>
        <dbReference type="Rhea" id="RHEA:11092"/>
        <dbReference type="ChEBI" id="CHEBI:15378"/>
        <dbReference type="ChEBI" id="CHEBI:57540"/>
        <dbReference type="ChEBI" id="CHEBI:57597"/>
        <dbReference type="ChEBI" id="CHEBI:57642"/>
        <dbReference type="ChEBI" id="CHEBI:57945"/>
        <dbReference type="EC" id="1.1.1.94"/>
    </reaction>
    <physiologicalReaction direction="right-to-left" evidence="1">
        <dbReference type="Rhea" id="RHEA:11094"/>
    </physiologicalReaction>
</comment>
<comment type="catalytic activity">
    <reaction evidence="1">
        <text>sn-glycerol 3-phosphate + NADP(+) = dihydroxyacetone phosphate + NADPH + H(+)</text>
        <dbReference type="Rhea" id="RHEA:11096"/>
        <dbReference type="ChEBI" id="CHEBI:15378"/>
        <dbReference type="ChEBI" id="CHEBI:57597"/>
        <dbReference type="ChEBI" id="CHEBI:57642"/>
        <dbReference type="ChEBI" id="CHEBI:57783"/>
        <dbReference type="ChEBI" id="CHEBI:58349"/>
        <dbReference type="EC" id="1.1.1.94"/>
    </reaction>
    <physiologicalReaction direction="right-to-left" evidence="1">
        <dbReference type="Rhea" id="RHEA:11098"/>
    </physiologicalReaction>
</comment>
<comment type="pathway">
    <text evidence="1">Membrane lipid metabolism; glycerophospholipid metabolism.</text>
</comment>
<comment type="subcellular location">
    <subcellularLocation>
        <location evidence="1">Cytoplasm</location>
    </subcellularLocation>
</comment>
<comment type="similarity">
    <text evidence="1">Belongs to the NAD-dependent glycerol-3-phosphate dehydrogenase family.</text>
</comment>
<reference key="1">
    <citation type="journal article" date="2005" name="Proc. Natl. Acad. Sci. U.S.A.">
        <title>Complete genome sequence of the probiotic lactic acid bacterium Lactobacillus acidophilus NCFM.</title>
        <authorList>
            <person name="Altermann E."/>
            <person name="Russell W.M."/>
            <person name="Azcarate-Peril M.A."/>
            <person name="Barrangou R."/>
            <person name="Buck B.L."/>
            <person name="McAuliffe O."/>
            <person name="Souther N."/>
            <person name="Dobson A."/>
            <person name="Duong T."/>
            <person name="Callanan M."/>
            <person name="Lick S."/>
            <person name="Hamrick A."/>
            <person name="Cano R."/>
            <person name="Klaenhammer T.R."/>
        </authorList>
    </citation>
    <scope>NUCLEOTIDE SEQUENCE [LARGE SCALE GENOMIC DNA]</scope>
    <source>
        <strain>ATCC 700396 / NCK56 / N2 / NCFM</strain>
    </source>
</reference>
<keyword id="KW-0963">Cytoplasm</keyword>
<keyword id="KW-0444">Lipid biosynthesis</keyword>
<keyword id="KW-0443">Lipid metabolism</keyword>
<keyword id="KW-0520">NAD</keyword>
<keyword id="KW-0521">NADP</keyword>
<keyword id="KW-0547">Nucleotide-binding</keyword>
<keyword id="KW-0560">Oxidoreductase</keyword>
<keyword id="KW-0594">Phospholipid biosynthesis</keyword>
<keyword id="KW-1208">Phospholipid metabolism</keyword>
<keyword id="KW-1185">Reference proteome</keyword>
<gene>
    <name evidence="1" type="primary">gpsA</name>
    <name type="ordered locus">LBA0678</name>
</gene>
<protein>
    <recommendedName>
        <fullName evidence="1">Glycerol-3-phosphate dehydrogenase [NAD(P)+]</fullName>
        <ecNumber evidence="1">1.1.1.94</ecNumber>
    </recommendedName>
    <alternativeName>
        <fullName evidence="1">NAD(P)(+)-dependent glycerol-3-phosphate dehydrogenase</fullName>
    </alternativeName>
    <alternativeName>
        <fullName evidence="1">NAD(P)H-dependent dihydroxyacetone-phosphate reductase</fullName>
    </alternativeName>
</protein>
<name>GPDA_LACAC</name>